<reference key="1">
    <citation type="journal article" date="2004" name="Proc. Natl. Acad. Sci. U.S.A.">
        <title>The diploid genome sequence of Candida albicans.</title>
        <authorList>
            <person name="Jones T."/>
            <person name="Federspiel N.A."/>
            <person name="Chibana H."/>
            <person name="Dungan J."/>
            <person name="Kalman S."/>
            <person name="Magee B.B."/>
            <person name="Newport G."/>
            <person name="Thorstenson Y.R."/>
            <person name="Agabian N."/>
            <person name="Magee P.T."/>
            <person name="Davis R.W."/>
            <person name="Scherer S."/>
        </authorList>
    </citation>
    <scope>NUCLEOTIDE SEQUENCE [LARGE SCALE GENOMIC DNA]</scope>
    <source>
        <strain>SC5314 / ATCC MYA-2876</strain>
    </source>
</reference>
<reference key="2">
    <citation type="journal article" date="2007" name="Genome Biol.">
        <title>Assembly of the Candida albicans genome into sixteen supercontigs aligned on the eight chromosomes.</title>
        <authorList>
            <person name="van het Hoog M."/>
            <person name="Rast T.J."/>
            <person name="Martchenko M."/>
            <person name="Grindle S."/>
            <person name="Dignard D."/>
            <person name="Hogues H."/>
            <person name="Cuomo C."/>
            <person name="Berriman M."/>
            <person name="Scherer S."/>
            <person name="Magee B.B."/>
            <person name="Whiteway M."/>
            <person name="Chibana H."/>
            <person name="Nantel A."/>
            <person name="Magee P.T."/>
        </authorList>
    </citation>
    <scope>GENOME REANNOTATION</scope>
    <source>
        <strain>SC5314 / ATCC MYA-2876</strain>
    </source>
</reference>
<reference key="3">
    <citation type="journal article" date="2013" name="Genome Biol.">
        <title>Assembly of a phased diploid Candida albicans genome facilitates allele-specific measurements and provides a simple model for repeat and indel structure.</title>
        <authorList>
            <person name="Muzzey D."/>
            <person name="Schwartz K."/>
            <person name="Weissman J.S."/>
            <person name="Sherlock G."/>
        </authorList>
    </citation>
    <scope>NUCLEOTIDE SEQUENCE [LARGE SCALE GENOMIC DNA]</scope>
    <scope>GENOME REANNOTATION</scope>
    <source>
        <strain>SC5314 / ATCC MYA-2876</strain>
    </source>
</reference>
<evidence type="ECO:0000250" key="1">
    <source>
        <dbReference type="UniProtKB" id="Q07457"/>
    </source>
</evidence>
<evidence type="ECO:0000255" key="2"/>
<evidence type="ECO:0000255" key="3">
    <source>
        <dbReference type="PROSITE-ProRule" id="PRU00175"/>
    </source>
</evidence>
<evidence type="ECO:0000256" key="4">
    <source>
        <dbReference type="SAM" id="MobiDB-lite"/>
    </source>
</evidence>
<evidence type="ECO:0000305" key="5"/>
<comment type="function">
    <text evidence="1">E3 ubiquitin-protein ligase that mediates monoubiquitination of histone H2B to form H2BK123ub1. H2BK123ub1 gives a specific tag for epigenetic transcriptional activation and is also a prerequisite for H3K4me and H3K79me formation.</text>
</comment>
<comment type="catalytic activity">
    <reaction evidence="1">
        <text>S-ubiquitinyl-[E2 ubiquitin-conjugating enzyme]-L-cysteine + [acceptor protein]-L-lysine = [E2 ubiquitin-conjugating enzyme]-L-cysteine + N(6)-ubiquitinyl-[acceptor protein]-L-lysine.</text>
        <dbReference type="EC" id="2.3.2.27"/>
    </reaction>
</comment>
<comment type="pathway">
    <text>Protein modification; protein ubiquitination.</text>
</comment>
<comment type="subcellular location">
    <subcellularLocation>
        <location evidence="1">Nucleus</location>
    </subcellularLocation>
</comment>
<comment type="similarity">
    <text evidence="5">Belongs to the BRE1 family.</text>
</comment>
<gene>
    <name type="primary">BRE1</name>
    <name type="ordered locus">CAALFM_C500210CA</name>
    <name type="ORF">CaO19.8591</name>
    <name type="ORF">CaO19.976</name>
</gene>
<name>BRE1_CANAL</name>
<protein>
    <recommendedName>
        <fullName>E3 ubiquitin-protein ligase BRE1</fullName>
        <ecNumber evidence="1">2.3.2.27</ecNumber>
    </recommendedName>
    <alternativeName>
        <fullName evidence="5">RING-type E3 ubiquitin transferase BRE1</fullName>
    </alternativeName>
</protein>
<dbReference type="EC" id="2.3.2.27" evidence="1"/>
<dbReference type="EMBL" id="CP017627">
    <property type="protein sequence ID" value="AOW29467.1"/>
    <property type="molecule type" value="Genomic_DNA"/>
</dbReference>
<dbReference type="RefSeq" id="XP_716814.1">
    <property type="nucleotide sequence ID" value="XM_711721.1"/>
</dbReference>
<dbReference type="SMR" id="Q5A4X0"/>
<dbReference type="FunCoup" id="Q5A4X0">
    <property type="interactions" value="947"/>
</dbReference>
<dbReference type="STRING" id="237561.Q5A4X0"/>
<dbReference type="EnsemblFungi" id="C5_00210C_A-T">
    <property type="protein sequence ID" value="C5_00210C_A-T-p1"/>
    <property type="gene ID" value="C5_00210C_A"/>
</dbReference>
<dbReference type="GeneID" id="3641568"/>
<dbReference type="KEGG" id="cal:CAALFM_C500210CA"/>
<dbReference type="CGD" id="CAL0000187022">
    <property type="gene designation" value="BRE1"/>
</dbReference>
<dbReference type="VEuPathDB" id="FungiDB:C5_00210C_A"/>
<dbReference type="eggNOG" id="KOG0978">
    <property type="taxonomic scope" value="Eukaryota"/>
</dbReference>
<dbReference type="HOGENOM" id="CLU_019713_1_0_1"/>
<dbReference type="InParanoid" id="Q5A4X0"/>
<dbReference type="OMA" id="ERHRACR"/>
<dbReference type="OrthoDB" id="654191at2759"/>
<dbReference type="UniPathway" id="UPA00143"/>
<dbReference type="PRO" id="PR:Q5A4X0"/>
<dbReference type="Proteomes" id="UP000000559">
    <property type="component" value="Chromosome 5"/>
</dbReference>
<dbReference type="GO" id="GO:0033503">
    <property type="term" value="C:HULC complex"/>
    <property type="evidence" value="ECO:0000318"/>
    <property type="project" value="GO_Central"/>
</dbReference>
<dbReference type="GO" id="GO:0005634">
    <property type="term" value="C:nucleus"/>
    <property type="evidence" value="ECO:0000318"/>
    <property type="project" value="GO_Central"/>
</dbReference>
<dbReference type="GO" id="GO:0140850">
    <property type="term" value="F:histone H2B C-terminal K residue ubiquitin ligase activity"/>
    <property type="evidence" value="ECO:0000315"/>
    <property type="project" value="CGD"/>
</dbReference>
<dbReference type="GO" id="GO:0061630">
    <property type="term" value="F:ubiquitin protein ligase activity"/>
    <property type="evidence" value="ECO:0000318"/>
    <property type="project" value="GO_Central"/>
</dbReference>
<dbReference type="GO" id="GO:0008270">
    <property type="term" value="F:zinc ion binding"/>
    <property type="evidence" value="ECO:0007669"/>
    <property type="project" value="UniProtKB-KW"/>
</dbReference>
<dbReference type="GO" id="GO:0009267">
    <property type="term" value="P:cellular response to starvation"/>
    <property type="evidence" value="ECO:0000315"/>
    <property type="project" value="CGD"/>
</dbReference>
<dbReference type="GO" id="GO:0030447">
    <property type="term" value="P:filamentous growth"/>
    <property type="evidence" value="ECO:0000315"/>
    <property type="project" value="CGD"/>
</dbReference>
<dbReference type="GO" id="GO:0036180">
    <property type="term" value="P:filamentous growth of a population of unicellular organisms in response to biotic stimulus"/>
    <property type="evidence" value="ECO:0000315"/>
    <property type="project" value="CGD"/>
</dbReference>
<dbReference type="GO" id="GO:0036170">
    <property type="term" value="P:filamentous growth of a population of unicellular organisms in response to starvation"/>
    <property type="evidence" value="ECO:0000315"/>
    <property type="project" value="CGD"/>
</dbReference>
<dbReference type="GO" id="GO:0030448">
    <property type="term" value="P:hyphal growth"/>
    <property type="evidence" value="ECO:0000315"/>
    <property type="project" value="CGD"/>
</dbReference>
<dbReference type="GO" id="GO:0016567">
    <property type="term" value="P:protein ubiquitination"/>
    <property type="evidence" value="ECO:0007669"/>
    <property type="project" value="UniProtKB-UniPathway"/>
</dbReference>
<dbReference type="CDD" id="cd16499">
    <property type="entry name" value="RING-HC_Bre1-like"/>
    <property type="match status" value="1"/>
</dbReference>
<dbReference type="FunFam" id="3.30.40.10:FF:000414">
    <property type="entry name" value="E3 ubiquitin protein ligase"/>
    <property type="match status" value="1"/>
</dbReference>
<dbReference type="Gene3D" id="3.30.40.10">
    <property type="entry name" value="Zinc/RING finger domain, C3HC4 (zinc finger)"/>
    <property type="match status" value="1"/>
</dbReference>
<dbReference type="InterPro" id="IPR013956">
    <property type="entry name" value="E3_ubiquit_lig_Bre1"/>
</dbReference>
<dbReference type="InterPro" id="IPR001841">
    <property type="entry name" value="Znf_RING"/>
</dbReference>
<dbReference type="InterPro" id="IPR013083">
    <property type="entry name" value="Znf_RING/FYVE/PHD"/>
</dbReference>
<dbReference type="PANTHER" id="PTHR23163:SF0">
    <property type="entry name" value="E3 UBIQUITIN-PROTEIN LIGASE BRE1"/>
    <property type="match status" value="1"/>
</dbReference>
<dbReference type="PANTHER" id="PTHR23163">
    <property type="entry name" value="RING FINGER PROTEIN-RELATED"/>
    <property type="match status" value="1"/>
</dbReference>
<dbReference type="Pfam" id="PF08647">
    <property type="entry name" value="BRE1"/>
    <property type="match status" value="1"/>
</dbReference>
<dbReference type="Pfam" id="PF13923">
    <property type="entry name" value="zf-C3HC4_2"/>
    <property type="match status" value="1"/>
</dbReference>
<dbReference type="SMART" id="SM00184">
    <property type="entry name" value="RING"/>
    <property type="match status" value="1"/>
</dbReference>
<dbReference type="SUPFAM" id="SSF57850">
    <property type="entry name" value="RING/U-box"/>
    <property type="match status" value="1"/>
</dbReference>
<dbReference type="PROSITE" id="PS50089">
    <property type="entry name" value="ZF_RING_2"/>
    <property type="match status" value="1"/>
</dbReference>
<keyword id="KW-0156">Chromatin regulator</keyword>
<keyword id="KW-0175">Coiled coil</keyword>
<keyword id="KW-0479">Metal-binding</keyword>
<keyword id="KW-0539">Nucleus</keyword>
<keyword id="KW-1185">Reference proteome</keyword>
<keyword id="KW-0808">Transferase</keyword>
<keyword id="KW-0833">Ubl conjugation pathway</keyword>
<keyword id="KW-0862">Zinc</keyword>
<keyword id="KW-0863">Zinc-finger</keyword>
<accession>Q5A4X0</accession>
<accession>A0A1D8PMX1</accession>
<sequence>MAVDNEKKRSTPDSLNSPHAKKSKPMQELSESGPLTQADVVYFQKEAIWRQMIQYKQQMMSMRSELIRLQRESDASKHIVTVLTAWYEQILALFDELNSEETSDLLLAITKNDDEQLDLIRKKLSNLISSKVTFDSAKYEKVSGELALLSRQNEQMTEEKRSLGERIDELESKITELAKEHERAQSKTLKRLDSQRHIKTEEDEQSTTKEENPQPNGHHKENDKTAVVDSEELDNLKCELDKLKTANQLLVQQVEQLTKENQSLIQKSLNLENKLHNLEESDLEDNTYYKKIVKNNQSLQEQIGKLTKLNSSNVSRLNELERQQNDLKSVIEGEIIEENEKLKQQLQESENNLVRIRTTRDELLSKNNILTSQLQDQKTNESLVELNNVLSKRVESLTEERLEAIVGTPGTGKLEDLSQQELIHKISQLNNEIKEVELAFKQTREITLKKLTSSIDQENLTKKLTIEKNKADQKYFSAMRVKDSLTNENKLLKAQIAKSQDLIKNLNDLEKKYLNKIDLLSNQLVDFRIIKENSLAENSKLHDELKTLNIAQDALHQEVERVNAKLESTLKEHTDLQESNKKRELELAKLQKQLQSTENILQKYKTNNTNSLLQEDEQQLEALRSIAKCSVCSKNWKDTAITVCGHVFCSKCTQERLAARLRRCPSCNRGFSANDLLSIHL</sequence>
<organism>
    <name type="scientific">Candida albicans (strain SC5314 / ATCC MYA-2876)</name>
    <name type="common">Yeast</name>
    <dbReference type="NCBI Taxonomy" id="237561"/>
    <lineage>
        <taxon>Eukaryota</taxon>
        <taxon>Fungi</taxon>
        <taxon>Dikarya</taxon>
        <taxon>Ascomycota</taxon>
        <taxon>Saccharomycotina</taxon>
        <taxon>Pichiomycetes</taxon>
        <taxon>Debaryomycetaceae</taxon>
        <taxon>Candida/Lodderomyces clade</taxon>
        <taxon>Candida</taxon>
    </lineage>
</organism>
<feature type="chain" id="PRO_0000055848" description="E3 ubiquitin-protein ligase BRE1">
    <location>
        <begin position="1"/>
        <end position="681"/>
    </location>
</feature>
<feature type="zinc finger region" description="RING-type" evidence="3">
    <location>
        <begin position="629"/>
        <end position="668"/>
    </location>
</feature>
<feature type="region of interest" description="Disordered" evidence="4">
    <location>
        <begin position="1"/>
        <end position="32"/>
    </location>
</feature>
<feature type="region of interest" description="Disordered" evidence="4">
    <location>
        <begin position="180"/>
        <end position="226"/>
    </location>
</feature>
<feature type="coiled-coil region" evidence="2">
    <location>
        <begin position="50"/>
        <end position="77"/>
    </location>
</feature>
<feature type="coiled-coil region" evidence="2">
    <location>
        <begin position="136"/>
        <end position="190"/>
    </location>
</feature>
<feature type="coiled-coil region" evidence="2">
    <location>
        <begin position="224"/>
        <end position="446"/>
    </location>
</feature>
<feature type="coiled-coil region" evidence="2">
    <location>
        <begin position="477"/>
        <end position="628"/>
    </location>
</feature>
<feature type="compositionally biased region" description="Basic and acidic residues" evidence="4">
    <location>
        <begin position="1"/>
        <end position="11"/>
    </location>
</feature>
<proteinExistence type="inferred from homology"/>